<accession>Q8GWW4</accession>
<accession>F4JW13</accession>
<accession>Q9SZB0</accession>
<accession>Q9SZB1</accession>
<comment type="function">
    <text evidence="4">Glycosyltransferase required for the addition of both glucuronic acid and 4-O-methylglucuronic acid branches to xylan in stem cell walls. In association with GUX1, is responsible for almost all of the substitutions of the xylan backbone in stem glucuronoxylan.</text>
</comment>
<comment type="cofactor">
    <cofactor evidence="2">
        <name>Mn(2+)</name>
        <dbReference type="ChEBI" id="CHEBI:29035"/>
    </cofactor>
</comment>
<comment type="subcellular location">
    <subcellularLocation>
        <location evidence="6 7">Golgi apparatus membrane</location>
        <topology evidence="6 7">Single-pass type II membrane protein</topology>
    </subcellularLocation>
</comment>
<comment type="alternative products">
    <event type="alternative splicing"/>
    <isoform>
        <id>Q8GWW4-1</id>
        <name>1</name>
        <sequence type="displayed"/>
    </isoform>
    <isoform>
        <id>Q8GWW4-2</id>
        <name>2</name>
        <sequence type="described" ref="VSP_042767"/>
    </isoform>
</comment>
<comment type="disruption phenotype">
    <text evidence="4">No visible phenotype under normal growth conditions, but mutant plants show reduced xylan substitution.</text>
</comment>
<comment type="similarity">
    <text evidence="5">Belongs to the glycosyltransferase 8 family. Glycogenin subfamily.</text>
</comment>
<comment type="sequence caution" evidence="5">
    <conflict type="erroneous gene model prediction">
        <sequence resource="EMBL-CDS" id="CAB38791"/>
    </conflict>
    <text>Was originally thought to correspond to two different genes At4g33330 and At4g33340.</text>
</comment>
<comment type="sequence caution" evidence="5">
    <conflict type="erroneous gene model prediction">
        <sequence resource="EMBL-CDS" id="CAB38792"/>
    </conflict>
    <text>Was originally thought to correspond to two different genes At4g33330 and At4g33340.</text>
</comment>
<comment type="sequence caution" evidence="5">
    <conflict type="erroneous gene model prediction">
        <sequence resource="EMBL-CDS" id="CAB80050"/>
    </conflict>
    <text>Was originally thought to correspond to two different genes At4g33330 and At4g33340.</text>
</comment>
<comment type="sequence caution" evidence="5">
    <conflict type="erroneous gene model prediction">
        <sequence resource="EMBL-CDS" id="CAB80051"/>
    </conflict>
    <text>Was originally thought to correspond to two different genes At4g33330 and At4g33340.</text>
</comment>
<protein>
    <recommendedName>
        <fullName>UDP-glucuronate:xylan alpha-glucuronosyltransferase 2</fullName>
        <shortName>UDP-GlcA:xylan glucuronyltransferase 2</shortName>
        <ecNumber>2.4.1.-</ecNumber>
    </recommendedName>
    <alternativeName>
        <fullName>Glycogenin-like protein 2</fullName>
    </alternativeName>
    <alternativeName>
        <fullName>Plant glycogenin-like starch initiation protein 3</fullName>
    </alternativeName>
    <alternativeName>
        <fullName>Protein GLUCURONIC ACID SUBSTITUTION OF XYLAN 2</fullName>
        <shortName>AtGUX2</shortName>
    </alternativeName>
</protein>
<proteinExistence type="evidence at transcript level"/>
<organism>
    <name type="scientific">Arabidopsis thaliana</name>
    <name type="common">Mouse-ear cress</name>
    <dbReference type="NCBI Taxonomy" id="3702"/>
    <lineage>
        <taxon>Eukaryota</taxon>
        <taxon>Viridiplantae</taxon>
        <taxon>Streptophyta</taxon>
        <taxon>Embryophyta</taxon>
        <taxon>Tracheophyta</taxon>
        <taxon>Spermatophyta</taxon>
        <taxon>Magnoliopsida</taxon>
        <taxon>eudicotyledons</taxon>
        <taxon>Gunneridae</taxon>
        <taxon>Pentapetalae</taxon>
        <taxon>rosids</taxon>
        <taxon>malvids</taxon>
        <taxon>Brassicales</taxon>
        <taxon>Brassicaceae</taxon>
        <taxon>Camelineae</taxon>
        <taxon>Arabidopsis</taxon>
    </lineage>
</organism>
<dbReference type="EC" id="2.4.1.-"/>
<dbReference type="EMBL" id="AL035678">
    <property type="protein sequence ID" value="CAB38791.1"/>
    <property type="status" value="ALT_SEQ"/>
    <property type="molecule type" value="Genomic_DNA"/>
</dbReference>
<dbReference type="EMBL" id="AL035678">
    <property type="protein sequence ID" value="CAB38792.1"/>
    <property type="status" value="ALT_SEQ"/>
    <property type="molecule type" value="Genomic_DNA"/>
</dbReference>
<dbReference type="EMBL" id="AL161583">
    <property type="protein sequence ID" value="CAB80050.1"/>
    <property type="status" value="ALT_SEQ"/>
    <property type="molecule type" value="Genomic_DNA"/>
</dbReference>
<dbReference type="EMBL" id="AL161583">
    <property type="protein sequence ID" value="CAB80051.1"/>
    <property type="status" value="ALT_SEQ"/>
    <property type="molecule type" value="Genomic_DNA"/>
</dbReference>
<dbReference type="EMBL" id="CP002687">
    <property type="protein sequence ID" value="AEE86207.1"/>
    <property type="molecule type" value="Genomic_DNA"/>
</dbReference>
<dbReference type="EMBL" id="CP002687">
    <property type="protein sequence ID" value="AEE86208.1"/>
    <property type="molecule type" value="Genomic_DNA"/>
</dbReference>
<dbReference type="EMBL" id="AK118592">
    <property type="protein sequence ID" value="BAC43192.1"/>
    <property type="molecule type" value="mRNA"/>
</dbReference>
<dbReference type="EMBL" id="BT005924">
    <property type="protein sequence ID" value="AAO64859.1"/>
    <property type="molecule type" value="mRNA"/>
</dbReference>
<dbReference type="EMBL" id="AK175846">
    <property type="protein sequence ID" value="BAD43609.1"/>
    <property type="molecule type" value="mRNA"/>
</dbReference>
<dbReference type="EMBL" id="AK176001">
    <property type="protein sequence ID" value="BAD43764.1"/>
    <property type="molecule type" value="mRNA"/>
</dbReference>
<dbReference type="PIR" id="T05984">
    <property type="entry name" value="T05984"/>
</dbReference>
<dbReference type="PIR" id="T05985">
    <property type="entry name" value="T05985"/>
</dbReference>
<dbReference type="RefSeq" id="NP_001154284.1">
    <molecule id="Q8GWW4-2"/>
    <property type="nucleotide sequence ID" value="NM_001160812.1"/>
</dbReference>
<dbReference type="RefSeq" id="NP_195059.3">
    <molecule id="Q8GWW4-1"/>
    <property type="nucleotide sequence ID" value="NM_119487.3"/>
</dbReference>
<dbReference type="SMR" id="Q8GWW4"/>
<dbReference type="FunCoup" id="Q8GWW4">
    <property type="interactions" value="48"/>
</dbReference>
<dbReference type="STRING" id="3702.Q8GWW4"/>
<dbReference type="CAZy" id="GT8">
    <property type="family name" value="Glycosyltransferase Family 8"/>
</dbReference>
<dbReference type="PaxDb" id="3702-AT4G33330.2"/>
<dbReference type="ProteomicsDB" id="247153">
    <molecule id="Q8GWW4-1"/>
</dbReference>
<dbReference type="EnsemblPlants" id="AT4G33330.1">
    <molecule id="Q8GWW4-1"/>
    <property type="protein sequence ID" value="AT4G33330.1"/>
    <property type="gene ID" value="AT4G33330"/>
</dbReference>
<dbReference type="EnsemblPlants" id="AT4G33330.2">
    <molecule id="Q8GWW4-2"/>
    <property type="protein sequence ID" value="AT4G33330.2"/>
    <property type="gene ID" value="AT4G33330"/>
</dbReference>
<dbReference type="GeneID" id="829469"/>
<dbReference type="Gramene" id="AT4G33330.1">
    <molecule id="Q8GWW4-1"/>
    <property type="protein sequence ID" value="AT4G33330.1"/>
    <property type="gene ID" value="AT4G33330"/>
</dbReference>
<dbReference type="Gramene" id="AT4G33330.2">
    <molecule id="Q8GWW4-2"/>
    <property type="protein sequence ID" value="AT4G33330.2"/>
    <property type="gene ID" value="AT4G33330"/>
</dbReference>
<dbReference type="KEGG" id="ath:AT4G33330"/>
<dbReference type="Araport" id="AT4G33330"/>
<dbReference type="TAIR" id="AT4G33330">
    <property type="gene designation" value="PGSIP3"/>
</dbReference>
<dbReference type="eggNOG" id="KOG1950">
    <property type="taxonomic scope" value="Eukaryota"/>
</dbReference>
<dbReference type="HOGENOM" id="CLU_023070_1_0_1"/>
<dbReference type="InParanoid" id="Q8GWW4"/>
<dbReference type="PhylomeDB" id="Q8GWW4"/>
<dbReference type="PRO" id="PR:Q8GWW4"/>
<dbReference type="Proteomes" id="UP000006548">
    <property type="component" value="Chromosome 4"/>
</dbReference>
<dbReference type="ExpressionAtlas" id="Q8GWW4">
    <property type="expression patterns" value="baseline and differential"/>
</dbReference>
<dbReference type="GO" id="GO:0005794">
    <property type="term" value="C:Golgi apparatus"/>
    <property type="evidence" value="ECO:0000314"/>
    <property type="project" value="TAIR"/>
</dbReference>
<dbReference type="GO" id="GO:0000139">
    <property type="term" value="C:Golgi membrane"/>
    <property type="evidence" value="ECO:0007669"/>
    <property type="project" value="UniProtKB-SubCell"/>
</dbReference>
<dbReference type="GO" id="GO:0015020">
    <property type="term" value="F:glucuronosyltransferase activity"/>
    <property type="evidence" value="ECO:0000314"/>
    <property type="project" value="TAIR"/>
</dbReference>
<dbReference type="GO" id="GO:0080116">
    <property type="term" value="F:glucuronoxylan glucuronosyltransferase activity"/>
    <property type="evidence" value="ECO:0000315"/>
    <property type="project" value="UniProtKB"/>
</dbReference>
<dbReference type="GO" id="GO:0016757">
    <property type="term" value="F:glycosyltransferase activity"/>
    <property type="evidence" value="ECO:0000318"/>
    <property type="project" value="GO_Central"/>
</dbReference>
<dbReference type="GO" id="GO:0046872">
    <property type="term" value="F:metal ion binding"/>
    <property type="evidence" value="ECO:0007669"/>
    <property type="project" value="UniProtKB-KW"/>
</dbReference>
<dbReference type="GO" id="GO:0071555">
    <property type="term" value="P:cell wall organization"/>
    <property type="evidence" value="ECO:0007669"/>
    <property type="project" value="UniProtKB-KW"/>
</dbReference>
<dbReference type="GO" id="GO:0010417">
    <property type="term" value="P:glucuronoxylan biosynthetic process"/>
    <property type="evidence" value="ECO:0000315"/>
    <property type="project" value="UniProtKB"/>
</dbReference>
<dbReference type="GO" id="GO:0009834">
    <property type="term" value="P:plant-type secondary cell wall biogenesis"/>
    <property type="evidence" value="ECO:0000316"/>
    <property type="project" value="TAIR"/>
</dbReference>
<dbReference type="GO" id="GO:0045492">
    <property type="term" value="P:xylan biosynthetic process"/>
    <property type="evidence" value="ECO:0000314"/>
    <property type="project" value="TAIR"/>
</dbReference>
<dbReference type="CDD" id="cd02537">
    <property type="entry name" value="GT8_Glycogenin"/>
    <property type="match status" value="1"/>
</dbReference>
<dbReference type="FunFam" id="3.90.550.10:FF:000018">
    <property type="entry name" value="Hexosyltransferase"/>
    <property type="match status" value="1"/>
</dbReference>
<dbReference type="Gene3D" id="3.90.550.10">
    <property type="entry name" value="Spore Coat Polysaccharide Biosynthesis Protein SpsA, Chain A"/>
    <property type="match status" value="1"/>
</dbReference>
<dbReference type="InterPro" id="IPR002495">
    <property type="entry name" value="Glyco_trans_8"/>
</dbReference>
<dbReference type="InterPro" id="IPR050587">
    <property type="entry name" value="GNT1/Glycosyltrans_8"/>
</dbReference>
<dbReference type="InterPro" id="IPR029044">
    <property type="entry name" value="Nucleotide-diphossugar_trans"/>
</dbReference>
<dbReference type="PANTHER" id="PTHR11183">
    <property type="entry name" value="GLYCOGENIN SUBFAMILY MEMBER"/>
    <property type="match status" value="1"/>
</dbReference>
<dbReference type="Pfam" id="PF01501">
    <property type="entry name" value="Glyco_transf_8"/>
    <property type="match status" value="1"/>
</dbReference>
<dbReference type="SUPFAM" id="SSF53448">
    <property type="entry name" value="Nucleotide-diphospho-sugar transferases"/>
    <property type="match status" value="1"/>
</dbReference>
<gene>
    <name type="primary">GUX2</name>
    <name type="synonym">PGSIP3</name>
    <name type="ordered locus">At4g33330/At4g33340</name>
    <name type="ORF">F17M5.90/F17M5.100</name>
</gene>
<keyword id="KW-0025">Alternative splicing</keyword>
<keyword id="KW-0961">Cell wall biogenesis/degradation</keyword>
<keyword id="KW-0328">Glycosyltransferase</keyword>
<keyword id="KW-0333">Golgi apparatus</keyword>
<keyword id="KW-0464">Manganese</keyword>
<keyword id="KW-0472">Membrane</keyword>
<keyword id="KW-0479">Metal-binding</keyword>
<keyword id="KW-1185">Reference proteome</keyword>
<keyword id="KW-0735">Signal-anchor</keyword>
<keyword id="KW-0808">Transferase</keyword>
<keyword id="KW-0812">Transmembrane</keyword>
<keyword id="KW-1133">Transmembrane helix</keyword>
<name>GUX2_ARATH</name>
<reference key="1">
    <citation type="journal article" date="1999" name="Nature">
        <title>Sequence and analysis of chromosome 4 of the plant Arabidopsis thaliana.</title>
        <authorList>
            <person name="Mayer K.F.X."/>
            <person name="Schueller C."/>
            <person name="Wambutt R."/>
            <person name="Murphy G."/>
            <person name="Volckaert G."/>
            <person name="Pohl T."/>
            <person name="Duesterhoeft A."/>
            <person name="Stiekema W."/>
            <person name="Entian K.-D."/>
            <person name="Terryn N."/>
            <person name="Harris B."/>
            <person name="Ansorge W."/>
            <person name="Brandt P."/>
            <person name="Grivell L.A."/>
            <person name="Rieger M."/>
            <person name="Weichselgartner M."/>
            <person name="de Simone V."/>
            <person name="Obermaier B."/>
            <person name="Mache R."/>
            <person name="Mueller M."/>
            <person name="Kreis M."/>
            <person name="Delseny M."/>
            <person name="Puigdomenech P."/>
            <person name="Watson M."/>
            <person name="Schmidtheini T."/>
            <person name="Reichert B."/>
            <person name="Portetelle D."/>
            <person name="Perez-Alonso M."/>
            <person name="Boutry M."/>
            <person name="Bancroft I."/>
            <person name="Vos P."/>
            <person name="Hoheisel J."/>
            <person name="Zimmermann W."/>
            <person name="Wedler H."/>
            <person name="Ridley P."/>
            <person name="Langham S.-A."/>
            <person name="McCullagh B."/>
            <person name="Bilham L."/>
            <person name="Robben J."/>
            <person name="van der Schueren J."/>
            <person name="Grymonprez B."/>
            <person name="Chuang Y.-J."/>
            <person name="Vandenbussche F."/>
            <person name="Braeken M."/>
            <person name="Weltjens I."/>
            <person name="Voet M."/>
            <person name="Bastiaens I."/>
            <person name="Aert R."/>
            <person name="Defoor E."/>
            <person name="Weitzenegger T."/>
            <person name="Bothe G."/>
            <person name="Ramsperger U."/>
            <person name="Hilbert H."/>
            <person name="Braun M."/>
            <person name="Holzer E."/>
            <person name="Brandt A."/>
            <person name="Peters S."/>
            <person name="van Staveren M."/>
            <person name="Dirkse W."/>
            <person name="Mooijman P."/>
            <person name="Klein Lankhorst R."/>
            <person name="Rose M."/>
            <person name="Hauf J."/>
            <person name="Koetter P."/>
            <person name="Berneiser S."/>
            <person name="Hempel S."/>
            <person name="Feldpausch M."/>
            <person name="Lamberth S."/>
            <person name="Van den Daele H."/>
            <person name="De Keyser A."/>
            <person name="Buysshaert C."/>
            <person name="Gielen J."/>
            <person name="Villarroel R."/>
            <person name="De Clercq R."/>
            <person name="van Montagu M."/>
            <person name="Rogers J."/>
            <person name="Cronin A."/>
            <person name="Quail M.A."/>
            <person name="Bray-Allen S."/>
            <person name="Clark L."/>
            <person name="Doggett J."/>
            <person name="Hall S."/>
            <person name="Kay M."/>
            <person name="Lennard N."/>
            <person name="McLay K."/>
            <person name="Mayes R."/>
            <person name="Pettett A."/>
            <person name="Rajandream M.A."/>
            <person name="Lyne M."/>
            <person name="Benes V."/>
            <person name="Rechmann S."/>
            <person name="Borkova D."/>
            <person name="Bloecker H."/>
            <person name="Scharfe M."/>
            <person name="Grimm M."/>
            <person name="Loehnert T.-H."/>
            <person name="Dose S."/>
            <person name="de Haan M."/>
            <person name="Maarse A.C."/>
            <person name="Schaefer M."/>
            <person name="Mueller-Auer S."/>
            <person name="Gabel C."/>
            <person name="Fuchs M."/>
            <person name="Fartmann B."/>
            <person name="Granderath K."/>
            <person name="Dauner D."/>
            <person name="Herzl A."/>
            <person name="Neumann S."/>
            <person name="Argiriou A."/>
            <person name="Vitale D."/>
            <person name="Liguori R."/>
            <person name="Piravandi E."/>
            <person name="Massenet O."/>
            <person name="Quigley F."/>
            <person name="Clabauld G."/>
            <person name="Muendlein A."/>
            <person name="Felber R."/>
            <person name="Schnabl S."/>
            <person name="Hiller R."/>
            <person name="Schmidt W."/>
            <person name="Lecharny A."/>
            <person name="Aubourg S."/>
            <person name="Chefdor F."/>
            <person name="Cooke R."/>
            <person name="Berger C."/>
            <person name="Monfort A."/>
            <person name="Casacuberta E."/>
            <person name="Gibbons T."/>
            <person name="Weber N."/>
            <person name="Vandenbol M."/>
            <person name="Bargues M."/>
            <person name="Terol J."/>
            <person name="Torres A."/>
            <person name="Perez-Perez A."/>
            <person name="Purnelle B."/>
            <person name="Bent E."/>
            <person name="Johnson S."/>
            <person name="Tacon D."/>
            <person name="Jesse T."/>
            <person name="Heijnen L."/>
            <person name="Schwarz S."/>
            <person name="Scholler P."/>
            <person name="Heber S."/>
            <person name="Francs P."/>
            <person name="Bielke C."/>
            <person name="Frishman D."/>
            <person name="Haase D."/>
            <person name="Lemcke K."/>
            <person name="Mewes H.-W."/>
            <person name="Stocker S."/>
            <person name="Zaccaria P."/>
            <person name="Bevan M."/>
            <person name="Wilson R.K."/>
            <person name="de la Bastide M."/>
            <person name="Habermann K."/>
            <person name="Parnell L."/>
            <person name="Dedhia N."/>
            <person name="Gnoj L."/>
            <person name="Schutz K."/>
            <person name="Huang E."/>
            <person name="Spiegel L."/>
            <person name="Sekhon M."/>
            <person name="Murray J."/>
            <person name="Sheet P."/>
            <person name="Cordes M."/>
            <person name="Abu-Threideh J."/>
            <person name="Stoneking T."/>
            <person name="Kalicki J."/>
            <person name="Graves T."/>
            <person name="Harmon G."/>
            <person name="Edwards J."/>
            <person name="Latreille P."/>
            <person name="Courtney L."/>
            <person name="Cloud J."/>
            <person name="Abbott A."/>
            <person name="Scott K."/>
            <person name="Johnson D."/>
            <person name="Minx P."/>
            <person name="Bentley D."/>
            <person name="Fulton B."/>
            <person name="Miller N."/>
            <person name="Greco T."/>
            <person name="Kemp K."/>
            <person name="Kramer J."/>
            <person name="Fulton L."/>
            <person name="Mardis E."/>
            <person name="Dante M."/>
            <person name="Pepin K."/>
            <person name="Hillier L.W."/>
            <person name="Nelson J."/>
            <person name="Spieth J."/>
            <person name="Ryan E."/>
            <person name="Andrews S."/>
            <person name="Geisel C."/>
            <person name="Layman D."/>
            <person name="Du H."/>
            <person name="Ali J."/>
            <person name="Berghoff A."/>
            <person name="Jones K."/>
            <person name="Drone K."/>
            <person name="Cotton M."/>
            <person name="Joshu C."/>
            <person name="Antonoiu B."/>
            <person name="Zidanic M."/>
            <person name="Strong C."/>
            <person name="Sun H."/>
            <person name="Lamar B."/>
            <person name="Yordan C."/>
            <person name="Ma P."/>
            <person name="Zhong J."/>
            <person name="Preston R."/>
            <person name="Vil D."/>
            <person name="Shekher M."/>
            <person name="Matero A."/>
            <person name="Shah R."/>
            <person name="Swaby I.K."/>
            <person name="O'Shaughnessy A."/>
            <person name="Rodriguez M."/>
            <person name="Hoffman J."/>
            <person name="Till S."/>
            <person name="Granat S."/>
            <person name="Shohdy N."/>
            <person name="Hasegawa A."/>
            <person name="Hameed A."/>
            <person name="Lodhi M."/>
            <person name="Johnson A."/>
            <person name="Chen E."/>
            <person name="Marra M.A."/>
            <person name="Martienssen R."/>
            <person name="McCombie W.R."/>
        </authorList>
    </citation>
    <scope>NUCLEOTIDE SEQUENCE [LARGE SCALE GENOMIC DNA]</scope>
    <source>
        <strain>cv. Columbia</strain>
    </source>
</reference>
<reference key="2">
    <citation type="journal article" date="2017" name="Plant J.">
        <title>Araport11: a complete reannotation of the Arabidopsis thaliana reference genome.</title>
        <authorList>
            <person name="Cheng C.Y."/>
            <person name="Krishnakumar V."/>
            <person name="Chan A.P."/>
            <person name="Thibaud-Nissen F."/>
            <person name="Schobel S."/>
            <person name="Town C.D."/>
        </authorList>
    </citation>
    <scope>GENOME REANNOTATION</scope>
    <source>
        <strain>cv. Columbia</strain>
    </source>
</reference>
<reference key="3">
    <citation type="journal article" date="2002" name="Science">
        <title>Functional annotation of a full-length Arabidopsis cDNA collection.</title>
        <authorList>
            <person name="Seki M."/>
            <person name="Narusaka M."/>
            <person name="Kamiya A."/>
            <person name="Ishida J."/>
            <person name="Satou M."/>
            <person name="Sakurai T."/>
            <person name="Nakajima M."/>
            <person name="Enju A."/>
            <person name="Akiyama K."/>
            <person name="Oono Y."/>
            <person name="Muramatsu M."/>
            <person name="Hayashizaki Y."/>
            <person name="Kawai J."/>
            <person name="Carninci P."/>
            <person name="Itoh M."/>
            <person name="Ishii Y."/>
            <person name="Arakawa T."/>
            <person name="Shibata K."/>
            <person name="Shinagawa A."/>
            <person name="Shinozaki K."/>
        </authorList>
    </citation>
    <scope>NUCLEOTIDE SEQUENCE [LARGE SCALE MRNA] (ISOFORM 1)</scope>
    <source>
        <strain>cv. Columbia</strain>
    </source>
</reference>
<reference key="4">
    <citation type="journal article" date="2003" name="Science">
        <title>Empirical analysis of transcriptional activity in the Arabidopsis genome.</title>
        <authorList>
            <person name="Yamada K."/>
            <person name="Lim J."/>
            <person name="Dale J.M."/>
            <person name="Chen H."/>
            <person name="Shinn P."/>
            <person name="Palm C.J."/>
            <person name="Southwick A.M."/>
            <person name="Wu H.C."/>
            <person name="Kim C.J."/>
            <person name="Nguyen M."/>
            <person name="Pham P.K."/>
            <person name="Cheuk R.F."/>
            <person name="Karlin-Newmann G."/>
            <person name="Liu S.X."/>
            <person name="Lam B."/>
            <person name="Sakano H."/>
            <person name="Wu T."/>
            <person name="Yu G."/>
            <person name="Miranda M."/>
            <person name="Quach H.L."/>
            <person name="Tripp M."/>
            <person name="Chang C.H."/>
            <person name="Lee J.M."/>
            <person name="Toriumi M.J."/>
            <person name="Chan M.M."/>
            <person name="Tang C.C."/>
            <person name="Onodera C.S."/>
            <person name="Deng J.M."/>
            <person name="Akiyama K."/>
            <person name="Ansari Y."/>
            <person name="Arakawa T."/>
            <person name="Banh J."/>
            <person name="Banno F."/>
            <person name="Bowser L."/>
            <person name="Brooks S.Y."/>
            <person name="Carninci P."/>
            <person name="Chao Q."/>
            <person name="Choy N."/>
            <person name="Enju A."/>
            <person name="Goldsmith A.D."/>
            <person name="Gurjal M."/>
            <person name="Hansen N.F."/>
            <person name="Hayashizaki Y."/>
            <person name="Johnson-Hopson C."/>
            <person name="Hsuan V.W."/>
            <person name="Iida K."/>
            <person name="Karnes M."/>
            <person name="Khan S."/>
            <person name="Koesema E."/>
            <person name="Ishida J."/>
            <person name="Jiang P.X."/>
            <person name="Jones T."/>
            <person name="Kawai J."/>
            <person name="Kamiya A."/>
            <person name="Meyers C."/>
            <person name="Nakajima M."/>
            <person name="Narusaka M."/>
            <person name="Seki M."/>
            <person name="Sakurai T."/>
            <person name="Satou M."/>
            <person name="Tamse R."/>
            <person name="Vaysberg M."/>
            <person name="Wallender E.K."/>
            <person name="Wong C."/>
            <person name="Yamamura Y."/>
            <person name="Yuan S."/>
            <person name="Shinozaki K."/>
            <person name="Davis R.W."/>
            <person name="Theologis A."/>
            <person name="Ecker J.R."/>
        </authorList>
    </citation>
    <scope>NUCLEOTIDE SEQUENCE [LARGE SCALE MRNA] (ISOFORM 1)</scope>
    <source>
        <strain>cv. Columbia</strain>
    </source>
</reference>
<reference key="5">
    <citation type="submission" date="2004-09" db="EMBL/GenBank/DDBJ databases">
        <title>Large-scale analysis of RIKEN Arabidopsis full-length (RAFL) cDNAs.</title>
        <authorList>
            <person name="Totoki Y."/>
            <person name="Seki M."/>
            <person name="Ishida J."/>
            <person name="Nakajima M."/>
            <person name="Enju A."/>
            <person name="Kamiya A."/>
            <person name="Narusaka M."/>
            <person name="Shin-i T."/>
            <person name="Nakagawa M."/>
            <person name="Sakamoto N."/>
            <person name="Oishi K."/>
            <person name="Kohara Y."/>
            <person name="Kobayashi M."/>
            <person name="Toyoda A."/>
            <person name="Sakaki Y."/>
            <person name="Sakurai T."/>
            <person name="Iida K."/>
            <person name="Akiyama K."/>
            <person name="Satou M."/>
            <person name="Toyoda T."/>
            <person name="Konagaya A."/>
            <person name="Carninci P."/>
            <person name="Kawai J."/>
            <person name="Hayashizaki Y."/>
            <person name="Shinozaki K."/>
        </authorList>
    </citation>
    <scope>NUCLEOTIDE SEQUENCE [LARGE SCALE MRNA] (ISOFORM 1)</scope>
    <source>
        <strain>cv. Columbia</strain>
    </source>
</reference>
<reference key="6">
    <citation type="journal article" date="2005" name="Plant Sci.">
        <title>Reduced expression of a protein homologous to glycogenin leads to reduction of starch content in Arabidopsis leaves.</title>
        <authorList>
            <person name="Chatterjee M."/>
            <person name="Berbezy P."/>
            <person name="Vyas D."/>
            <person name="Coates S."/>
            <person name="Barsby T."/>
        </authorList>
        <dbReference type="AGRICOLA" id="IND43669941"/>
    </citation>
    <scope>GENE FAMILY</scope>
</reference>
<reference key="7">
    <citation type="journal article" date="2010" name="PLoS ONE">
        <title>An integrative approach to the identification of Arabidopsis and rice genes involved in xylan and secondary wall development.</title>
        <authorList>
            <person name="Oikawa A."/>
            <person name="Joshi H.J."/>
            <person name="Rennie E.A."/>
            <person name="Ebert B."/>
            <person name="Manisseri C."/>
            <person name="Heazlewood J.L."/>
            <person name="Scheller H.V."/>
        </authorList>
    </citation>
    <scope>SUBCELLULAR LOCATION</scope>
</reference>
<reference key="8">
    <citation type="journal article" date="2010" name="Proc. Natl. Acad. Sci. U.S.A.">
        <title>Absence of branches from xylan in Arabidopsis gux mutants reveals potential for simplification of lignocellulosic biomass.</title>
        <authorList>
            <person name="Mortimer J.C."/>
            <person name="Miles G.P."/>
            <person name="Brown D.M."/>
            <person name="Zhang Z."/>
            <person name="Segura M.P."/>
            <person name="Weimar T."/>
            <person name="Yu X."/>
            <person name="Seffen K.A."/>
            <person name="Stephens E."/>
            <person name="Turner S.R."/>
            <person name="Dupree P."/>
        </authorList>
    </citation>
    <scope>FUNCTION</scope>
    <scope>SUBCELLULAR LOCATION</scope>
    <scope>DISRUPTION PHENOTYPE</scope>
</reference>
<evidence type="ECO:0000250" key="1">
    <source>
        <dbReference type="UniProtKB" id="P13280"/>
    </source>
</evidence>
<evidence type="ECO:0000250" key="2">
    <source>
        <dbReference type="UniProtKB" id="P46976"/>
    </source>
</evidence>
<evidence type="ECO:0000255" key="3"/>
<evidence type="ECO:0000269" key="4">
    <source>
    </source>
</evidence>
<evidence type="ECO:0000305" key="5"/>
<evidence type="ECO:0000305" key="6">
    <source>
    </source>
</evidence>
<evidence type="ECO:0000305" key="7">
    <source>
    </source>
</evidence>
<feature type="chain" id="PRO_0000416734" description="UDP-glucuronate:xylan alpha-glucuronosyltransferase 2">
    <location>
        <begin position="1"/>
        <end position="596"/>
    </location>
</feature>
<feature type="transmembrane region" description="Helical; Signal-anchor for type II membrane protein" evidence="3">
    <location>
        <begin position="17"/>
        <end position="37"/>
    </location>
</feature>
<feature type="binding site" evidence="2">
    <location>
        <begin position="395"/>
        <end position="397"/>
    </location>
    <ligand>
        <name>substrate</name>
    </ligand>
</feature>
<feature type="binding site" evidence="2">
    <location>
        <position position="395"/>
    </location>
    <ligand>
        <name>Mn(2+)</name>
        <dbReference type="ChEBI" id="CHEBI:29035"/>
    </ligand>
</feature>
<feature type="binding site" evidence="2">
    <location>
        <position position="397"/>
    </location>
    <ligand>
        <name>Mn(2+)</name>
        <dbReference type="ChEBI" id="CHEBI:29035"/>
    </ligand>
</feature>
<feature type="binding site" evidence="2">
    <location>
        <begin position="424"/>
        <end position="426"/>
    </location>
    <ligand>
        <name>substrate</name>
    </ligand>
</feature>
<feature type="binding site" evidence="2">
    <location>
        <begin position="451"/>
        <end position="455"/>
    </location>
    <ligand>
        <name>substrate</name>
    </ligand>
</feature>
<feature type="binding site" evidence="2">
    <location>
        <begin position="504"/>
        <end position="509"/>
    </location>
    <ligand>
        <name>substrate</name>
    </ligand>
</feature>
<feature type="binding site" evidence="2">
    <location>
        <position position="504"/>
    </location>
    <ligand>
        <name>Mn(2+)</name>
        <dbReference type="ChEBI" id="CHEBI:29035"/>
    </ligand>
</feature>
<feature type="site" description="Important for catalytic activity" evidence="1">
    <location>
        <position position="379"/>
    </location>
</feature>
<feature type="splice variant" id="VSP_042767" description="In isoform 2." evidence="5">
    <original>RSYLIG</original>
    <variation>PNINFRMVSAQLEKCLAFDEKGIKVINLAEEMENTL</variation>
    <location>
        <begin position="591"/>
        <end position="596"/>
    </location>
</feature>
<sequence length="596" mass="70059">MTIMTMIMKMAPSKSALIRFNLVLLGFSFLLYTAIFFHPSSSVYFSSGASFVGCSFRDCTPKVVRGVKMQELVEENEINKKDLLTASNQTKLEAPSFMEEILTRGLGKTKIGMVNMEECDLTNWKRYGETVHIHFERVSKLFKWQDLFPEWIDEEEETEVPTCPEIPMPDFESLEKLDLVVVKLPCNYPEEGWRREVLRLQVNLVAANLAAKKGKTDWRWKSKVLFWSKCQPMIEIFRCDDLEKREADWWLYRPEVVRLQQRLSLPVGSCNLALPLWAPQGVDKVYDLTKIEAETKRPKREAYVTVLHSSESYVCGAITLAQSLLQTNTKRDLILLHDDSISITKLRALAAAGWKLRRIIRIRNPLAEKDSYNEYNYSKFRLWQLTDYDKVIFIDADIIVLRNLDLLFHFPQMSATGNDVWIYNSGIMVIEPSNCTFTTIMSQRSEIVSYNGGDQGYLNEIFVWWHRLPRRVNFLKNFWSNTTKERNIKNNLFAAEPPQVYAVHYLGWKPWLCYRDYDCNYDVDEQLVYASDAAHVRWWKVHDSMDDALQKFCRLTKKRRTEINWERRKARLRGSTDYHWKINVTDPRRRRSYLIG</sequence>